<sequence>MRILIITGLSGSGKSTAVRALEDEGFFCQDNLPVALFPTFVDLVDNAKERIRDVALVMDIRGRDFNKGFEKVFQEITEAGHLVDILFFDATDEVIIRRFSETRRRHPAIDSGSVPEGIRSERQQLAGLRSFATQIIDTSELNVHQLKDLVISLVKGGEGGREMTVHLQSFGYRFGLPLESDLVMDVRFLPNPYFIPELKEFSGLDPKVRAYVLKHDETGEFLTKFKELLEFLLPGYKREGKSYLTISIGCTGGRHRSVVIAEEIRDFFKRKQLNLKVSHRDMEKG</sequence>
<comment type="function">
    <text evidence="1">Displays ATPase and GTPase activities.</text>
</comment>
<comment type="similarity">
    <text evidence="1">Belongs to the RapZ-like family.</text>
</comment>
<keyword id="KW-0067">ATP-binding</keyword>
<keyword id="KW-0342">GTP-binding</keyword>
<keyword id="KW-0547">Nucleotide-binding</keyword>
<keyword id="KW-1185">Reference proteome</keyword>
<protein>
    <recommendedName>
        <fullName evidence="1">Nucleotide-binding protein Geob_2284</fullName>
    </recommendedName>
</protein>
<organism>
    <name type="scientific">Geotalea daltonii (strain DSM 22248 / JCM 15807 / FRC-32)</name>
    <name type="common">Geobacter daltonii</name>
    <dbReference type="NCBI Taxonomy" id="316067"/>
    <lineage>
        <taxon>Bacteria</taxon>
        <taxon>Pseudomonadati</taxon>
        <taxon>Thermodesulfobacteriota</taxon>
        <taxon>Desulfuromonadia</taxon>
        <taxon>Geobacterales</taxon>
        <taxon>Geobacteraceae</taxon>
        <taxon>Geotalea</taxon>
    </lineage>
</organism>
<reference key="1">
    <citation type="submission" date="2009-01" db="EMBL/GenBank/DDBJ databases">
        <title>Complete sequence of Geobacter sp. FRC-32.</title>
        <authorList>
            <consortium name="US DOE Joint Genome Institute"/>
            <person name="Lucas S."/>
            <person name="Copeland A."/>
            <person name="Lapidus A."/>
            <person name="Glavina del Rio T."/>
            <person name="Dalin E."/>
            <person name="Tice H."/>
            <person name="Bruce D."/>
            <person name="Goodwin L."/>
            <person name="Pitluck S."/>
            <person name="Saunders E."/>
            <person name="Brettin T."/>
            <person name="Detter J.C."/>
            <person name="Han C."/>
            <person name="Larimer F."/>
            <person name="Land M."/>
            <person name="Hauser L."/>
            <person name="Kyrpides N."/>
            <person name="Ovchinnikova G."/>
            <person name="Kostka J."/>
            <person name="Richardson P."/>
        </authorList>
    </citation>
    <scope>NUCLEOTIDE SEQUENCE [LARGE SCALE GENOMIC DNA]</scope>
    <source>
        <strain>DSM 22248 / JCM 15807 / FRC-32</strain>
    </source>
</reference>
<evidence type="ECO:0000255" key="1">
    <source>
        <dbReference type="HAMAP-Rule" id="MF_00636"/>
    </source>
</evidence>
<dbReference type="EMBL" id="CP001390">
    <property type="protein sequence ID" value="ACM20638.1"/>
    <property type="molecule type" value="Genomic_DNA"/>
</dbReference>
<dbReference type="RefSeq" id="WP_012647367.1">
    <property type="nucleotide sequence ID" value="NC_011979.1"/>
</dbReference>
<dbReference type="SMR" id="B9M9R6"/>
<dbReference type="STRING" id="316067.Geob_2284"/>
<dbReference type="KEGG" id="geo:Geob_2284"/>
<dbReference type="eggNOG" id="COG1660">
    <property type="taxonomic scope" value="Bacteria"/>
</dbReference>
<dbReference type="HOGENOM" id="CLU_059558_0_0_7"/>
<dbReference type="OrthoDB" id="9784461at2"/>
<dbReference type="Proteomes" id="UP000007721">
    <property type="component" value="Chromosome"/>
</dbReference>
<dbReference type="GO" id="GO:0005524">
    <property type="term" value="F:ATP binding"/>
    <property type="evidence" value="ECO:0007669"/>
    <property type="project" value="UniProtKB-UniRule"/>
</dbReference>
<dbReference type="GO" id="GO:0005525">
    <property type="term" value="F:GTP binding"/>
    <property type="evidence" value="ECO:0007669"/>
    <property type="project" value="UniProtKB-UniRule"/>
</dbReference>
<dbReference type="Gene3D" id="3.40.50.300">
    <property type="entry name" value="P-loop containing nucleotide triphosphate hydrolases"/>
    <property type="match status" value="1"/>
</dbReference>
<dbReference type="HAMAP" id="MF_00636">
    <property type="entry name" value="RapZ_like"/>
    <property type="match status" value="1"/>
</dbReference>
<dbReference type="InterPro" id="IPR027417">
    <property type="entry name" value="P-loop_NTPase"/>
</dbReference>
<dbReference type="InterPro" id="IPR005337">
    <property type="entry name" value="RapZ-like"/>
</dbReference>
<dbReference type="InterPro" id="IPR053930">
    <property type="entry name" value="RapZ-like_N"/>
</dbReference>
<dbReference type="InterPro" id="IPR053931">
    <property type="entry name" value="RapZ_C"/>
</dbReference>
<dbReference type="NCBIfam" id="NF003828">
    <property type="entry name" value="PRK05416.1"/>
    <property type="match status" value="1"/>
</dbReference>
<dbReference type="PANTHER" id="PTHR30448">
    <property type="entry name" value="RNASE ADAPTER PROTEIN RAPZ"/>
    <property type="match status" value="1"/>
</dbReference>
<dbReference type="PANTHER" id="PTHR30448:SF0">
    <property type="entry name" value="RNASE ADAPTER PROTEIN RAPZ"/>
    <property type="match status" value="1"/>
</dbReference>
<dbReference type="Pfam" id="PF22740">
    <property type="entry name" value="PapZ_C"/>
    <property type="match status" value="1"/>
</dbReference>
<dbReference type="Pfam" id="PF03668">
    <property type="entry name" value="RapZ-like_N"/>
    <property type="match status" value="1"/>
</dbReference>
<dbReference type="PIRSF" id="PIRSF005052">
    <property type="entry name" value="P-loopkin"/>
    <property type="match status" value="1"/>
</dbReference>
<dbReference type="SUPFAM" id="SSF52540">
    <property type="entry name" value="P-loop containing nucleoside triphosphate hydrolases"/>
    <property type="match status" value="1"/>
</dbReference>
<name>Y2284_GEODF</name>
<proteinExistence type="inferred from homology"/>
<feature type="chain" id="PRO_1000147361" description="Nucleotide-binding protein Geob_2284">
    <location>
        <begin position="1"/>
        <end position="285"/>
    </location>
</feature>
<feature type="binding site" evidence="1">
    <location>
        <begin position="8"/>
        <end position="15"/>
    </location>
    <ligand>
        <name>ATP</name>
        <dbReference type="ChEBI" id="CHEBI:30616"/>
    </ligand>
</feature>
<feature type="binding site" evidence="1">
    <location>
        <begin position="59"/>
        <end position="62"/>
    </location>
    <ligand>
        <name>GTP</name>
        <dbReference type="ChEBI" id="CHEBI:37565"/>
    </ligand>
</feature>
<accession>B9M9R6</accession>
<gene>
    <name type="ordered locus">Geob_2284</name>
</gene>